<name>SP5G_FINM2</name>
<feature type="chain" id="PRO_1000196502" description="Putative septation protein SpoVG">
    <location>
        <begin position="1"/>
        <end position="108"/>
    </location>
</feature>
<feature type="region of interest" description="Disordered" evidence="2">
    <location>
        <begin position="84"/>
        <end position="108"/>
    </location>
</feature>
<feature type="compositionally biased region" description="Acidic residues" evidence="2">
    <location>
        <begin position="94"/>
        <end position="108"/>
    </location>
</feature>
<evidence type="ECO:0000255" key="1">
    <source>
        <dbReference type="HAMAP-Rule" id="MF_00819"/>
    </source>
</evidence>
<evidence type="ECO:0000256" key="2">
    <source>
        <dbReference type="SAM" id="MobiDB-lite"/>
    </source>
</evidence>
<proteinExistence type="inferred from homology"/>
<accession>B0S1Q1</accession>
<organism>
    <name type="scientific">Finegoldia magna (strain ATCC 29328 / DSM 20472 / WAL 2508)</name>
    <name type="common">Peptostreptococcus magnus</name>
    <dbReference type="NCBI Taxonomy" id="334413"/>
    <lineage>
        <taxon>Bacteria</taxon>
        <taxon>Bacillati</taxon>
        <taxon>Bacillota</taxon>
        <taxon>Tissierellia</taxon>
        <taxon>Tissierellales</taxon>
        <taxon>Peptoniphilaceae</taxon>
        <taxon>Finegoldia</taxon>
    </lineage>
</organism>
<gene>
    <name evidence="1" type="primary">spoVG</name>
    <name type="ordered locus">FMG_0873</name>
</gene>
<sequence>MQITDVRIKLLNIDNRLKAIASVTFDDEIVIHDIKVIEGEEGLFLAMPSRKVGNDRYRDIAHPISSPAREKIETAVINKYNEEFEKQSSVETEPVTEENMETAENENE</sequence>
<dbReference type="EMBL" id="AP008971">
    <property type="protein sequence ID" value="BAG08291.1"/>
    <property type="molecule type" value="Genomic_DNA"/>
</dbReference>
<dbReference type="RefSeq" id="WP_002837910.1">
    <property type="nucleotide sequence ID" value="NC_010376.1"/>
</dbReference>
<dbReference type="SMR" id="B0S1Q1"/>
<dbReference type="STRING" id="334413.FMG_0873"/>
<dbReference type="KEGG" id="fma:FMG_0873"/>
<dbReference type="eggNOG" id="COG2088">
    <property type="taxonomic scope" value="Bacteria"/>
</dbReference>
<dbReference type="HOGENOM" id="CLU_103669_2_1_9"/>
<dbReference type="Proteomes" id="UP000001319">
    <property type="component" value="Chromosome"/>
</dbReference>
<dbReference type="GO" id="GO:0000917">
    <property type="term" value="P:division septum assembly"/>
    <property type="evidence" value="ECO:0007669"/>
    <property type="project" value="UniProtKB-KW"/>
</dbReference>
<dbReference type="GO" id="GO:0030435">
    <property type="term" value="P:sporulation resulting in formation of a cellular spore"/>
    <property type="evidence" value="ECO:0007669"/>
    <property type="project" value="InterPro"/>
</dbReference>
<dbReference type="Gene3D" id="3.30.1120.40">
    <property type="entry name" value="Stage V sporulation protein G"/>
    <property type="match status" value="1"/>
</dbReference>
<dbReference type="HAMAP" id="MF_00819">
    <property type="entry name" value="SpoVG"/>
    <property type="match status" value="1"/>
</dbReference>
<dbReference type="InterPro" id="IPR007170">
    <property type="entry name" value="SpoVG"/>
</dbReference>
<dbReference type="InterPro" id="IPR036751">
    <property type="entry name" value="SpoVG_sf"/>
</dbReference>
<dbReference type="NCBIfam" id="NF009749">
    <property type="entry name" value="PRK13259.1"/>
    <property type="match status" value="1"/>
</dbReference>
<dbReference type="PANTHER" id="PTHR38429">
    <property type="entry name" value="SEPTATION PROTEIN SPOVG-RELATED"/>
    <property type="match status" value="1"/>
</dbReference>
<dbReference type="PANTHER" id="PTHR38429:SF1">
    <property type="entry name" value="SEPTATION PROTEIN SPOVG-RELATED"/>
    <property type="match status" value="1"/>
</dbReference>
<dbReference type="Pfam" id="PF04026">
    <property type="entry name" value="SpoVG"/>
    <property type="match status" value="1"/>
</dbReference>
<dbReference type="SUPFAM" id="SSF160537">
    <property type="entry name" value="SpoVG-like"/>
    <property type="match status" value="1"/>
</dbReference>
<comment type="function">
    <text evidence="1">Could be involved in septation.</text>
</comment>
<comment type="similarity">
    <text evidence="1">Belongs to the SpoVG family.</text>
</comment>
<protein>
    <recommendedName>
        <fullName evidence="1">Putative septation protein SpoVG</fullName>
    </recommendedName>
</protein>
<reference key="1">
    <citation type="journal article" date="2008" name="DNA Res.">
        <title>Complete genome sequence of Finegoldia magna, an anaerobic opportunistic pathogen.</title>
        <authorList>
            <person name="Goto T."/>
            <person name="Yamashita A."/>
            <person name="Hirakawa H."/>
            <person name="Matsutani M."/>
            <person name="Todo K."/>
            <person name="Ohshima K."/>
            <person name="Toh H."/>
            <person name="Miyamoto K."/>
            <person name="Kuhara S."/>
            <person name="Hattori M."/>
            <person name="Shimizu T."/>
            <person name="Akimoto S."/>
        </authorList>
    </citation>
    <scope>NUCLEOTIDE SEQUENCE [LARGE SCALE GENOMIC DNA]</scope>
    <source>
        <strain>ATCC 29328 / DSM 20472 / WAL 2508</strain>
    </source>
</reference>
<keyword id="KW-0131">Cell cycle</keyword>
<keyword id="KW-0132">Cell division</keyword>
<keyword id="KW-1185">Reference proteome</keyword>
<keyword id="KW-0717">Septation</keyword>